<dbReference type="EMBL" id="BX284601">
    <property type="protein sequence ID" value="CCD70126.1"/>
    <property type="molecule type" value="Genomic_DNA"/>
</dbReference>
<dbReference type="PIR" id="T32752">
    <property type="entry name" value="T32752"/>
</dbReference>
<dbReference type="RefSeq" id="NP_491488.1">
    <property type="nucleotide sequence ID" value="NM_059087.3"/>
</dbReference>
<dbReference type="DIP" id="DIP-55471N"/>
<dbReference type="FunCoup" id="O44749">
    <property type="interactions" value="1513"/>
</dbReference>
<dbReference type="IntAct" id="O44749">
    <property type="interactions" value="3"/>
</dbReference>
<dbReference type="STRING" id="6239.W03G9.2.1"/>
<dbReference type="PaxDb" id="6239-W03G9.2"/>
<dbReference type="PeptideAtlas" id="O44749"/>
<dbReference type="EnsemblMetazoa" id="W03G9.2.1">
    <property type="protein sequence ID" value="W03G9.2.1"/>
    <property type="gene ID" value="WBGene00021014"/>
</dbReference>
<dbReference type="GeneID" id="189170"/>
<dbReference type="KEGG" id="cel:CELE_W03G9.2"/>
<dbReference type="UCSC" id="W03G9.2">
    <property type="organism name" value="c. elegans"/>
</dbReference>
<dbReference type="AGR" id="WB:WBGene00021014"/>
<dbReference type="CTD" id="189170"/>
<dbReference type="WormBase" id="W03G9.2">
    <property type="protein sequence ID" value="CE14556"/>
    <property type="gene ID" value="WBGene00021014"/>
    <property type="gene designation" value="pid-4"/>
</dbReference>
<dbReference type="eggNOG" id="ENOG502RTA2">
    <property type="taxonomic scope" value="Eukaryota"/>
</dbReference>
<dbReference type="HOGENOM" id="CLU_026399_0_0_1"/>
<dbReference type="InParanoid" id="O44749"/>
<dbReference type="OMA" id="MFRRARH"/>
<dbReference type="OrthoDB" id="5783867at2759"/>
<dbReference type="SignaLink" id="O44749"/>
<dbReference type="PRO" id="PR:O44749"/>
<dbReference type="Proteomes" id="UP000001940">
    <property type="component" value="Chromosome I"/>
</dbReference>
<dbReference type="Bgee" id="WBGene00021014">
    <property type="expression patterns" value="Expressed in germ line (C elegans) and 3 other cell types or tissues"/>
</dbReference>
<dbReference type="GO" id="GO:0000932">
    <property type="term" value="C:P-body"/>
    <property type="evidence" value="ECO:0007669"/>
    <property type="project" value="UniProtKB-SubCell"/>
</dbReference>
<dbReference type="GO" id="GO:0048471">
    <property type="term" value="C:perinuclear region of cytoplasm"/>
    <property type="evidence" value="ECO:0007669"/>
    <property type="project" value="UniProtKB-SubCell"/>
</dbReference>
<dbReference type="GO" id="GO:0031047">
    <property type="term" value="P:regulatory ncRNA-mediated gene silencing"/>
    <property type="evidence" value="ECO:0007669"/>
    <property type="project" value="UniProtKB-KW"/>
</dbReference>
<name>PID4_CAEEL</name>
<keyword id="KW-0963">Cytoplasm</keyword>
<keyword id="KW-1185">Reference proteome</keyword>
<keyword id="KW-0943">RNA-mediated gene silencing</keyword>
<proteinExistence type="evidence at protein level"/>
<evidence type="ECO:0000256" key="1">
    <source>
        <dbReference type="SAM" id="MobiDB-lite"/>
    </source>
</evidence>
<evidence type="ECO:0000269" key="2">
    <source>
    </source>
</evidence>
<evidence type="ECO:0000305" key="3"/>
<evidence type="ECO:0000312" key="4">
    <source>
        <dbReference type="Proteomes" id="UP000001940"/>
    </source>
</evidence>
<evidence type="ECO:0000312" key="5">
    <source>
        <dbReference type="WormBase" id="W03G9.2"/>
    </source>
</evidence>
<accession>O44749</accession>
<sequence>MNTHNARDSDDESPLESEEHLKRFFAGRNLYSQTKIDDARKKSHDAKYAKEVEWDAKDTAKGKPVFKKYRQEIADKTSRCDAQFINNLHTYYGNGSELRELPETHYAVDFMGTTIATTEMTAELKKLKVLKKKTATSQFVREHRQLGFIPTPSRRSLSCTGRFMNFETKCDERPDRTNPEFSVGNNNFLSATISNLDEDFKTPSNCEHVASIVPKEISNALTALIPHVNVFDYEKGEMEIGKVLCSNKNLHAYVIPKQHDQEQMLKDFSARFLAWYNKLSHLQRDTFGTDKDPKRSGKQEDGKPMKPYFWRVNVILCLQEFQEEGTMFRRARHVCGIRPHKSQPGLDLYIEIDTGSMRALKTNYLTVRKLPQEFANVPTPILEVRFEGAKTEEDVARRIAHIRKTGRAYIKSFDTGKRKIYQNSFFNGQPKDWSNIETAVLLPPKESSMSKLFCEDRDCMGLCCTDQWLENAESSPGISTIPASWIADKNKKPFVDRSPQKFKFPASGSYMKPAN</sequence>
<reference evidence="4" key="1">
    <citation type="journal article" date="1998" name="Science">
        <title>Genome sequence of the nematode C. elegans: a platform for investigating biology.</title>
        <authorList>
            <consortium name="The C. elegans sequencing consortium"/>
        </authorList>
    </citation>
    <scope>NUCLEOTIDE SEQUENCE [LARGE SCALE GENOMIC DNA]</scope>
    <source>
        <strain evidence="4">Bristol N2</strain>
    </source>
</reference>
<reference evidence="3" key="2">
    <citation type="journal article" date="2021" name="EMBO J.">
        <title>Intrinsically disordered protein PID-2 modulates Z granules and is required for heritable piRNA-induced silencing in the Caenorhabditis elegans embryo.</title>
        <authorList>
            <person name="Placentino M."/>
            <person name="de Jesus Domingues A.M."/>
            <person name="Schreier J."/>
            <person name="Dietz S."/>
            <person name="Hellmann S."/>
            <person name="de Albuquerque B.F."/>
            <person name="Butter F."/>
            <person name="Ketting R.F."/>
        </authorList>
    </citation>
    <scope>FUNCTION</scope>
    <scope>INTERACTION WITH PID-2; APP-1 AND PRMT-5</scope>
    <scope>SUBCELLULAR LOCATION</scope>
    <scope>DEVELOPMENTAL STAGE</scope>
</reference>
<protein>
    <recommendedName>
        <fullName evidence="3">Protein pid-4</fullName>
    </recommendedName>
    <alternativeName>
        <fullName evidence="5">piRNA-induced silencing defective protein 4</fullName>
    </alternativeName>
</protein>
<comment type="function">
    <text evidence="2">Together with pid-5, it is involved in gene silencing mediated by a class of 21 nucleotide PIWI-interacting RNAs (piRNAs) that possess a uracil residue at the 5'-end (also called 21U-RNAs) and guide the Piwi protein prg-1 to its DNA targets for silencing (PubMed:33231880). Together with pid-5, it is required for the biogenesis of secondary and tertiary 22G-siRNAs (PubMed:33231880). Specifically, promotes the production of 22G-siRNAs from the 5' end of target mRNAs (PubMed:33231880). Together with pid-5, plays a role in small RNA-directed transgenerational epigenetic inheritance (also called RNAe) over several generations and germline immortality (PubMed:33231880). Together with pid-5, plays a role in the formation of liquid-like condensates in the cytoplasm called Z granules (PubMed:33231880).</text>
</comment>
<comment type="subunit">
    <text evidence="2">May interact with pid-2, app-1 and prmt-5.</text>
</comment>
<comment type="subcellular location">
    <subcellularLocation>
        <location evidence="2">Cytoplasm</location>
        <location evidence="2">Perinuclear region</location>
    </subcellularLocation>
    <subcellularLocation>
        <location evidence="2">Cytoplasm</location>
        <location evidence="2">P-body</location>
    </subcellularLocation>
    <text evidence="2">Co-localizes with pid-5 at P granules in germ cells.</text>
</comment>
<comment type="developmental stage">
    <text evidence="2">Expressed in germ cells of L4 larvae (PubMed:33231880). Expressed at high levels in the pachytene stage of the meiotic region of L4 larvae (PubMed:33231880).</text>
</comment>
<organism evidence="4">
    <name type="scientific">Caenorhabditis elegans</name>
    <dbReference type="NCBI Taxonomy" id="6239"/>
    <lineage>
        <taxon>Eukaryota</taxon>
        <taxon>Metazoa</taxon>
        <taxon>Ecdysozoa</taxon>
        <taxon>Nematoda</taxon>
        <taxon>Chromadorea</taxon>
        <taxon>Rhabditida</taxon>
        <taxon>Rhabditina</taxon>
        <taxon>Rhabditomorpha</taxon>
        <taxon>Rhabditoidea</taxon>
        <taxon>Rhabditidae</taxon>
        <taxon>Peloderinae</taxon>
        <taxon>Caenorhabditis</taxon>
    </lineage>
</organism>
<feature type="chain" id="PRO_0000452725" description="Protein pid-4">
    <location>
        <begin position="1"/>
        <end position="515"/>
    </location>
</feature>
<feature type="region of interest" description="Disordered" evidence="1">
    <location>
        <begin position="496"/>
        <end position="515"/>
    </location>
</feature>
<gene>
    <name evidence="5" type="primary">pid-4</name>
    <name evidence="5" type="ORF">W03G9.2</name>
</gene>